<comment type="function">
    <text evidence="1">E2-like enzyme required for the cytoplasm to vacuole transport (Cvt), autophagy and nucleophagy. Acts as an E2-like enzyme that catalyzes the conjugation of ATG12 to ATG5. ATG12 conjugation to ATG5 is required for proper localization of ATG8 to the preautophagosomal structure (PAS). Likely serves as an ATG5-recognition molecule (By similarity).</text>
</comment>
<comment type="subunit">
    <text evidence="1">Forms homooligomers.</text>
</comment>
<comment type="subcellular location">
    <subcellularLocation>
        <location evidence="1">Preautophagosomal structure membrane</location>
        <topology evidence="1">Peripheral membrane protein</topology>
    </subcellularLocation>
</comment>
<comment type="similarity">
    <text evidence="2">Belongs to the ATG10 family.</text>
</comment>
<accession>Q6FWS7</accession>
<sequence length="159" mass="18280">MTLEYEQFVQQLTRLAESRELYKKLPLLRHDLVHSPCCLHLTVPNSTRNTGGHIELLITFSRVYREPLLLIRVWATTALDGIETSQLAHSAETMATLRIPSYLTLGLDTILDAQYPHALQGAWYSVHPCDTRDIVGDDVTVRDTYLDRWVSVFLLWVCR</sequence>
<evidence type="ECO:0000250" key="1"/>
<evidence type="ECO:0000305" key="2"/>
<protein>
    <recommendedName>
        <fullName>Ubiquitin-like-conjugating enzyme ATG10</fullName>
        <ecNumber>2.3.2.-</ecNumber>
    </recommendedName>
    <alternativeName>
        <fullName>Autophagy-related protein 10</fullName>
    </alternativeName>
</protein>
<dbReference type="EC" id="2.3.2.-"/>
<dbReference type="EMBL" id="CR380949">
    <property type="protein sequence ID" value="CAG58223.1"/>
    <property type="molecule type" value="Genomic_DNA"/>
</dbReference>
<dbReference type="RefSeq" id="XP_445317.1">
    <property type="nucleotide sequence ID" value="XM_445317.1"/>
</dbReference>
<dbReference type="SMR" id="Q6FWS7"/>
<dbReference type="FunCoup" id="Q6FWS7">
    <property type="interactions" value="10"/>
</dbReference>
<dbReference type="STRING" id="284593.Q6FWS7"/>
<dbReference type="EnsemblFungi" id="CAGL0C03245g-T">
    <property type="protein sequence ID" value="CAGL0C03245g-T-p1"/>
    <property type="gene ID" value="CAGL0C03245g"/>
</dbReference>
<dbReference type="KEGG" id="cgr:2886871"/>
<dbReference type="CGD" id="CAL0127398">
    <property type="gene designation" value="CAGL0C03245g"/>
</dbReference>
<dbReference type="VEuPathDB" id="FungiDB:CAGL0C03245g"/>
<dbReference type="eggNOG" id="ENOG502S7IG">
    <property type="taxonomic scope" value="Eukaryota"/>
</dbReference>
<dbReference type="HOGENOM" id="CLU_114192_0_0_1"/>
<dbReference type="InParanoid" id="Q6FWS7"/>
<dbReference type="Proteomes" id="UP000002428">
    <property type="component" value="Chromosome C"/>
</dbReference>
<dbReference type="GO" id="GO:0034045">
    <property type="term" value="C:phagophore assembly site membrane"/>
    <property type="evidence" value="ECO:0007669"/>
    <property type="project" value="UniProtKB-SubCell"/>
</dbReference>
<dbReference type="GO" id="GO:0019777">
    <property type="term" value="F:Atg12 transferase activity"/>
    <property type="evidence" value="ECO:0007669"/>
    <property type="project" value="EnsemblFungi"/>
</dbReference>
<dbReference type="GO" id="GO:0000422">
    <property type="term" value="P:autophagy of mitochondrion"/>
    <property type="evidence" value="ECO:0007669"/>
    <property type="project" value="EnsemblFungi"/>
</dbReference>
<dbReference type="GO" id="GO:0032258">
    <property type="term" value="P:cytoplasm to vacuole targeting by the Cvt pathway"/>
    <property type="evidence" value="ECO:0007669"/>
    <property type="project" value="EnsemblFungi"/>
</dbReference>
<dbReference type="GO" id="GO:0034727">
    <property type="term" value="P:piecemeal microautophagy of the nucleus"/>
    <property type="evidence" value="ECO:0007669"/>
    <property type="project" value="EnsemblFungi"/>
</dbReference>
<dbReference type="GO" id="GO:0032446">
    <property type="term" value="P:protein modification by small protein conjugation"/>
    <property type="evidence" value="ECO:0007669"/>
    <property type="project" value="EnsemblFungi"/>
</dbReference>
<dbReference type="Gene3D" id="3.30.1460.50">
    <property type="match status" value="1"/>
</dbReference>
<dbReference type="InterPro" id="IPR016524">
    <property type="entry name" value="Atg10"/>
</dbReference>
<dbReference type="InterPro" id="IPR007135">
    <property type="entry name" value="Atg3/Atg10"/>
</dbReference>
<dbReference type="Pfam" id="PF03987">
    <property type="entry name" value="Autophagy_act_C"/>
    <property type="match status" value="1"/>
</dbReference>
<dbReference type="PIRSF" id="PIRSF007802">
    <property type="entry name" value="Autophagy-rel_ATG10"/>
    <property type="match status" value="1"/>
</dbReference>
<keyword id="KW-0072">Autophagy</keyword>
<keyword id="KW-0472">Membrane</keyword>
<keyword id="KW-0653">Protein transport</keyword>
<keyword id="KW-1185">Reference proteome</keyword>
<keyword id="KW-0808">Transferase</keyword>
<keyword id="KW-0813">Transport</keyword>
<keyword id="KW-0833">Ubl conjugation pathway</keyword>
<proteinExistence type="inferred from homology"/>
<name>ATG10_CANGA</name>
<reference key="1">
    <citation type="journal article" date="2004" name="Nature">
        <title>Genome evolution in yeasts.</title>
        <authorList>
            <person name="Dujon B."/>
            <person name="Sherman D."/>
            <person name="Fischer G."/>
            <person name="Durrens P."/>
            <person name="Casaregola S."/>
            <person name="Lafontaine I."/>
            <person name="de Montigny J."/>
            <person name="Marck C."/>
            <person name="Neuveglise C."/>
            <person name="Talla E."/>
            <person name="Goffard N."/>
            <person name="Frangeul L."/>
            <person name="Aigle M."/>
            <person name="Anthouard V."/>
            <person name="Babour A."/>
            <person name="Barbe V."/>
            <person name="Barnay S."/>
            <person name="Blanchin S."/>
            <person name="Beckerich J.-M."/>
            <person name="Beyne E."/>
            <person name="Bleykasten C."/>
            <person name="Boisrame A."/>
            <person name="Boyer J."/>
            <person name="Cattolico L."/>
            <person name="Confanioleri F."/>
            <person name="de Daruvar A."/>
            <person name="Despons L."/>
            <person name="Fabre E."/>
            <person name="Fairhead C."/>
            <person name="Ferry-Dumazet H."/>
            <person name="Groppi A."/>
            <person name="Hantraye F."/>
            <person name="Hennequin C."/>
            <person name="Jauniaux N."/>
            <person name="Joyet P."/>
            <person name="Kachouri R."/>
            <person name="Kerrest A."/>
            <person name="Koszul R."/>
            <person name="Lemaire M."/>
            <person name="Lesur I."/>
            <person name="Ma L."/>
            <person name="Muller H."/>
            <person name="Nicaud J.-M."/>
            <person name="Nikolski M."/>
            <person name="Oztas S."/>
            <person name="Ozier-Kalogeropoulos O."/>
            <person name="Pellenz S."/>
            <person name="Potier S."/>
            <person name="Richard G.-F."/>
            <person name="Straub M.-L."/>
            <person name="Suleau A."/>
            <person name="Swennen D."/>
            <person name="Tekaia F."/>
            <person name="Wesolowski-Louvel M."/>
            <person name="Westhof E."/>
            <person name="Wirth B."/>
            <person name="Zeniou-Meyer M."/>
            <person name="Zivanovic Y."/>
            <person name="Bolotin-Fukuhara M."/>
            <person name="Thierry A."/>
            <person name="Bouchier C."/>
            <person name="Caudron B."/>
            <person name="Scarpelli C."/>
            <person name="Gaillardin C."/>
            <person name="Weissenbach J."/>
            <person name="Wincker P."/>
            <person name="Souciet J.-L."/>
        </authorList>
    </citation>
    <scope>NUCLEOTIDE SEQUENCE [LARGE SCALE GENOMIC DNA]</scope>
    <source>
        <strain>ATCC 2001 / BCRC 20586 / JCM 3761 / NBRC 0622 / NRRL Y-65 / CBS 138</strain>
    </source>
</reference>
<gene>
    <name type="primary">ATG10</name>
    <name type="ordered locus">CAGL0C03245g</name>
</gene>
<feature type="chain" id="PRO_0000096187" description="Ubiquitin-like-conjugating enzyme ATG10">
    <location>
        <begin position="1"/>
        <end position="159"/>
    </location>
</feature>
<feature type="active site" description="Glycyl thioester intermediate" evidence="1">
    <location>
        <position position="129"/>
    </location>
</feature>
<organism>
    <name type="scientific">Candida glabrata (strain ATCC 2001 / BCRC 20586 / JCM 3761 / NBRC 0622 / NRRL Y-65 / CBS 138)</name>
    <name type="common">Yeast</name>
    <name type="synonym">Nakaseomyces glabratus</name>
    <dbReference type="NCBI Taxonomy" id="284593"/>
    <lineage>
        <taxon>Eukaryota</taxon>
        <taxon>Fungi</taxon>
        <taxon>Dikarya</taxon>
        <taxon>Ascomycota</taxon>
        <taxon>Saccharomycotina</taxon>
        <taxon>Saccharomycetes</taxon>
        <taxon>Saccharomycetales</taxon>
        <taxon>Saccharomycetaceae</taxon>
        <taxon>Nakaseomyces</taxon>
    </lineage>
</organism>